<gene>
    <name evidence="1" type="primary">rpsM</name>
    <name type="ordered locus">TERTU_0930</name>
</gene>
<protein>
    <recommendedName>
        <fullName evidence="1">Small ribosomal subunit protein uS13</fullName>
    </recommendedName>
    <alternativeName>
        <fullName evidence="3">30S ribosomal protein S13</fullName>
    </alternativeName>
</protein>
<comment type="function">
    <text evidence="1">Located at the top of the head of the 30S subunit, it contacts several helices of the 16S rRNA. In the 70S ribosome it contacts the 23S rRNA (bridge B1a) and protein L5 of the 50S subunit (bridge B1b), connecting the 2 subunits; these bridges are implicated in subunit movement. Contacts the tRNAs in the A and P-sites.</text>
</comment>
<comment type="subunit">
    <text evidence="1">Part of the 30S ribosomal subunit. Forms a loose heterodimer with protein S19. Forms two bridges to the 50S subunit in the 70S ribosome.</text>
</comment>
<comment type="similarity">
    <text evidence="1">Belongs to the universal ribosomal protein uS13 family.</text>
</comment>
<accession>C5BQ83</accession>
<sequence>MARIAGVNIPDHKHAVISLTYVFGIGKTTAKQICAATGVAESTKISALDDAKMDEIRAEVAKHTVEGDLRREISMNIKRLMDLGCYRGLRHRRSLPVRGQRSKTNARTRKGPRKPIKK</sequence>
<reference key="1">
    <citation type="journal article" date="2009" name="PLoS ONE">
        <title>The complete genome of Teredinibacter turnerae T7901: an intracellular endosymbiont of marine wood-boring bivalves (shipworms).</title>
        <authorList>
            <person name="Yang J.C."/>
            <person name="Madupu R."/>
            <person name="Durkin A.S."/>
            <person name="Ekborg N.A."/>
            <person name="Pedamallu C.S."/>
            <person name="Hostetler J.B."/>
            <person name="Radune D."/>
            <person name="Toms B.S."/>
            <person name="Henrissat B."/>
            <person name="Coutinho P.M."/>
            <person name="Schwarz S."/>
            <person name="Field L."/>
            <person name="Trindade-Silva A.E."/>
            <person name="Soares C.A.G."/>
            <person name="Elshahawi S."/>
            <person name="Hanora A."/>
            <person name="Schmidt E.W."/>
            <person name="Haygood M.G."/>
            <person name="Posfai J."/>
            <person name="Benner J."/>
            <person name="Madinger C."/>
            <person name="Nove J."/>
            <person name="Anton B."/>
            <person name="Chaudhary K."/>
            <person name="Foster J."/>
            <person name="Holman A."/>
            <person name="Kumar S."/>
            <person name="Lessard P.A."/>
            <person name="Luyten Y.A."/>
            <person name="Slatko B."/>
            <person name="Wood N."/>
            <person name="Wu B."/>
            <person name="Teplitski M."/>
            <person name="Mougous J.D."/>
            <person name="Ward N."/>
            <person name="Eisen J.A."/>
            <person name="Badger J.H."/>
            <person name="Distel D.L."/>
        </authorList>
    </citation>
    <scope>NUCLEOTIDE SEQUENCE [LARGE SCALE GENOMIC DNA]</scope>
    <source>
        <strain>ATCC 39867 / T7901</strain>
    </source>
</reference>
<evidence type="ECO:0000255" key="1">
    <source>
        <dbReference type="HAMAP-Rule" id="MF_01315"/>
    </source>
</evidence>
<evidence type="ECO:0000256" key="2">
    <source>
        <dbReference type="SAM" id="MobiDB-lite"/>
    </source>
</evidence>
<evidence type="ECO:0000305" key="3"/>
<proteinExistence type="inferred from homology"/>
<dbReference type="EMBL" id="CP001614">
    <property type="protein sequence ID" value="ACR11952.1"/>
    <property type="molecule type" value="Genomic_DNA"/>
</dbReference>
<dbReference type="RefSeq" id="WP_015818064.1">
    <property type="nucleotide sequence ID" value="NC_012997.1"/>
</dbReference>
<dbReference type="SMR" id="C5BQ83"/>
<dbReference type="STRING" id="377629.TERTU_0930"/>
<dbReference type="GeneID" id="58408703"/>
<dbReference type="GeneID" id="93857721"/>
<dbReference type="KEGG" id="ttu:TERTU_0930"/>
<dbReference type="eggNOG" id="COG0099">
    <property type="taxonomic scope" value="Bacteria"/>
</dbReference>
<dbReference type="HOGENOM" id="CLU_103849_1_2_6"/>
<dbReference type="OrthoDB" id="9803610at2"/>
<dbReference type="Proteomes" id="UP000009080">
    <property type="component" value="Chromosome"/>
</dbReference>
<dbReference type="GO" id="GO:0005829">
    <property type="term" value="C:cytosol"/>
    <property type="evidence" value="ECO:0007669"/>
    <property type="project" value="TreeGrafter"/>
</dbReference>
<dbReference type="GO" id="GO:0015935">
    <property type="term" value="C:small ribosomal subunit"/>
    <property type="evidence" value="ECO:0007669"/>
    <property type="project" value="TreeGrafter"/>
</dbReference>
<dbReference type="GO" id="GO:0019843">
    <property type="term" value="F:rRNA binding"/>
    <property type="evidence" value="ECO:0007669"/>
    <property type="project" value="UniProtKB-UniRule"/>
</dbReference>
<dbReference type="GO" id="GO:0003735">
    <property type="term" value="F:structural constituent of ribosome"/>
    <property type="evidence" value="ECO:0007669"/>
    <property type="project" value="InterPro"/>
</dbReference>
<dbReference type="GO" id="GO:0000049">
    <property type="term" value="F:tRNA binding"/>
    <property type="evidence" value="ECO:0007669"/>
    <property type="project" value="UniProtKB-UniRule"/>
</dbReference>
<dbReference type="GO" id="GO:0006412">
    <property type="term" value="P:translation"/>
    <property type="evidence" value="ECO:0007669"/>
    <property type="project" value="UniProtKB-UniRule"/>
</dbReference>
<dbReference type="FunFam" id="1.10.8.50:FF:000001">
    <property type="entry name" value="30S ribosomal protein S13"/>
    <property type="match status" value="1"/>
</dbReference>
<dbReference type="FunFam" id="4.10.910.10:FF:000001">
    <property type="entry name" value="30S ribosomal protein S13"/>
    <property type="match status" value="1"/>
</dbReference>
<dbReference type="Gene3D" id="1.10.8.50">
    <property type="match status" value="1"/>
</dbReference>
<dbReference type="Gene3D" id="4.10.910.10">
    <property type="entry name" value="30s ribosomal protein s13, domain 2"/>
    <property type="match status" value="1"/>
</dbReference>
<dbReference type="HAMAP" id="MF_01315">
    <property type="entry name" value="Ribosomal_uS13"/>
    <property type="match status" value="1"/>
</dbReference>
<dbReference type="InterPro" id="IPR027437">
    <property type="entry name" value="Rbsml_uS13_C"/>
</dbReference>
<dbReference type="InterPro" id="IPR001892">
    <property type="entry name" value="Ribosomal_uS13"/>
</dbReference>
<dbReference type="InterPro" id="IPR010979">
    <property type="entry name" value="Ribosomal_uS13-like_H2TH"/>
</dbReference>
<dbReference type="InterPro" id="IPR019980">
    <property type="entry name" value="Ribosomal_uS13_bac-type"/>
</dbReference>
<dbReference type="InterPro" id="IPR018269">
    <property type="entry name" value="Ribosomal_uS13_CS"/>
</dbReference>
<dbReference type="NCBIfam" id="TIGR03631">
    <property type="entry name" value="uS13_bact"/>
    <property type="match status" value="1"/>
</dbReference>
<dbReference type="PANTHER" id="PTHR10871">
    <property type="entry name" value="30S RIBOSOMAL PROTEIN S13/40S RIBOSOMAL PROTEIN S18"/>
    <property type="match status" value="1"/>
</dbReference>
<dbReference type="PANTHER" id="PTHR10871:SF1">
    <property type="entry name" value="SMALL RIBOSOMAL SUBUNIT PROTEIN US13M"/>
    <property type="match status" value="1"/>
</dbReference>
<dbReference type="Pfam" id="PF00416">
    <property type="entry name" value="Ribosomal_S13"/>
    <property type="match status" value="1"/>
</dbReference>
<dbReference type="PIRSF" id="PIRSF002134">
    <property type="entry name" value="Ribosomal_S13"/>
    <property type="match status" value="1"/>
</dbReference>
<dbReference type="SUPFAM" id="SSF46946">
    <property type="entry name" value="S13-like H2TH domain"/>
    <property type="match status" value="1"/>
</dbReference>
<dbReference type="PROSITE" id="PS00646">
    <property type="entry name" value="RIBOSOMAL_S13_1"/>
    <property type="match status" value="1"/>
</dbReference>
<dbReference type="PROSITE" id="PS50159">
    <property type="entry name" value="RIBOSOMAL_S13_2"/>
    <property type="match status" value="1"/>
</dbReference>
<keyword id="KW-1185">Reference proteome</keyword>
<keyword id="KW-0687">Ribonucleoprotein</keyword>
<keyword id="KW-0689">Ribosomal protein</keyword>
<keyword id="KW-0694">RNA-binding</keyword>
<keyword id="KW-0699">rRNA-binding</keyword>
<keyword id="KW-0820">tRNA-binding</keyword>
<name>RS13_TERTT</name>
<organism>
    <name type="scientific">Teredinibacter turnerae (strain ATCC 39867 / T7901)</name>
    <dbReference type="NCBI Taxonomy" id="377629"/>
    <lineage>
        <taxon>Bacteria</taxon>
        <taxon>Pseudomonadati</taxon>
        <taxon>Pseudomonadota</taxon>
        <taxon>Gammaproteobacteria</taxon>
        <taxon>Cellvibrionales</taxon>
        <taxon>Cellvibrionaceae</taxon>
        <taxon>Teredinibacter</taxon>
    </lineage>
</organism>
<feature type="chain" id="PRO_1000214408" description="Small ribosomal subunit protein uS13">
    <location>
        <begin position="1"/>
        <end position="118"/>
    </location>
</feature>
<feature type="region of interest" description="Disordered" evidence="2">
    <location>
        <begin position="93"/>
        <end position="118"/>
    </location>
</feature>